<reference key="1">
    <citation type="journal article" date="2002" name="J. Bacteriol.">
        <title>Genome sequence and analysis of the oral bacterium Fusobacterium nucleatum strain ATCC 25586.</title>
        <authorList>
            <person name="Kapatral V."/>
            <person name="Anderson I."/>
            <person name="Ivanova N."/>
            <person name="Reznik G."/>
            <person name="Los T."/>
            <person name="Lykidis A."/>
            <person name="Bhattacharyya A."/>
            <person name="Bartman A."/>
            <person name="Gardner W."/>
            <person name="Grechkin G."/>
            <person name="Zhu L."/>
            <person name="Vasieva O."/>
            <person name="Chu L."/>
            <person name="Kogan Y."/>
            <person name="Chaga O."/>
            <person name="Goltsman E."/>
            <person name="Bernal A."/>
            <person name="Larsen N."/>
            <person name="D'Souza M."/>
            <person name="Walunas T."/>
            <person name="Pusch G."/>
            <person name="Haselkorn R."/>
            <person name="Fonstein M."/>
            <person name="Kyrpides N.C."/>
            <person name="Overbeek R."/>
        </authorList>
    </citation>
    <scope>NUCLEOTIDE SEQUENCE [LARGE SCALE GENOMIC DNA]</scope>
    <source>
        <strain>ATCC 25586 / DSM 15643 / BCRC 10681 / CIP 101130 / JCM 8532 / KCTC 2640 / LMG 13131 / VPI 4355</strain>
    </source>
</reference>
<evidence type="ECO:0000255" key="1">
    <source>
        <dbReference type="HAMAP-Rule" id="MF_00683"/>
    </source>
</evidence>
<accession>Q8RG97</accession>
<sequence>MDSVLELVRKERRKNQIKREIEDNDRKIRDNRKRVELLLNLKEYLKVNMSYEEIIDIIENMQSDYEDRVDDYIIKNAELGKERREISKTIKDFKKSVS</sequence>
<name>TMAR_FUSNN</name>
<keyword id="KW-0175">Coiled coil</keyword>
<keyword id="KW-0963">Cytoplasm</keyword>
<keyword id="KW-1185">Reference proteome</keyword>
<proteinExistence type="inferred from homology"/>
<organism>
    <name type="scientific">Fusobacterium nucleatum subsp. nucleatum (strain ATCC 25586 / DSM 15643 / BCRC 10681 / CIP 101130 / JCM 8532 / KCTC 2640 / LMG 13131 / VPI 4355)</name>
    <dbReference type="NCBI Taxonomy" id="190304"/>
    <lineage>
        <taxon>Bacteria</taxon>
        <taxon>Fusobacteriati</taxon>
        <taxon>Fusobacteriota</taxon>
        <taxon>Fusobacteriia</taxon>
        <taxon>Fusobacteriales</taxon>
        <taxon>Fusobacteriaceae</taxon>
        <taxon>Fusobacterium</taxon>
    </lineage>
</organism>
<comment type="function">
    <text evidence="1">Pole-localizer protein involved in the regulation of several cellular processes.</text>
</comment>
<comment type="subcellular location">
    <subcellularLocation>
        <location evidence="1">Cytoplasm</location>
    </subcellularLocation>
</comment>
<comment type="similarity">
    <text evidence="1">Belongs to the pole-localizer TmaR family.</text>
</comment>
<feature type="chain" id="PRO_0000072762" description="Pole-localizer protein TmaR">
    <location>
        <begin position="1"/>
        <end position="98"/>
    </location>
</feature>
<feature type="coiled-coil region" evidence="1">
    <location>
        <begin position="7"/>
        <end position="34"/>
    </location>
</feature>
<protein>
    <recommendedName>
        <fullName evidence="1">Pole-localizer protein TmaR</fullName>
    </recommendedName>
</protein>
<dbReference type="EMBL" id="AE009951">
    <property type="protein sequence ID" value="AAL94614.1"/>
    <property type="molecule type" value="Genomic_DNA"/>
</dbReference>
<dbReference type="RefSeq" id="NP_603315.1">
    <property type="nucleotide sequence ID" value="NC_003454.1"/>
</dbReference>
<dbReference type="RefSeq" id="WP_005902753.1">
    <property type="nucleotide sequence ID" value="NZ_OZ209243.1"/>
</dbReference>
<dbReference type="SMR" id="Q8RG97"/>
<dbReference type="STRING" id="190304.FN0411"/>
<dbReference type="PaxDb" id="190304-FN0411"/>
<dbReference type="EnsemblBacteria" id="AAL94614">
    <property type="protein sequence ID" value="AAL94614"/>
    <property type="gene ID" value="FN0411"/>
</dbReference>
<dbReference type="KEGG" id="fnu:FN0411"/>
<dbReference type="PATRIC" id="fig|190304.8.peg.986"/>
<dbReference type="eggNOG" id="COG2926">
    <property type="taxonomic scope" value="Bacteria"/>
</dbReference>
<dbReference type="HOGENOM" id="CLU_153146_0_0_0"/>
<dbReference type="InParanoid" id="Q8RG97"/>
<dbReference type="BioCyc" id="FNUC190304:G1FZS-1005-MONOMER"/>
<dbReference type="Proteomes" id="UP000002521">
    <property type="component" value="Chromosome"/>
</dbReference>
<dbReference type="GO" id="GO:0005829">
    <property type="term" value="C:cytosol"/>
    <property type="evidence" value="ECO:0000318"/>
    <property type="project" value="GO_Central"/>
</dbReference>
<dbReference type="HAMAP" id="MF_00683">
    <property type="entry name" value="Pole_loc_TmaR"/>
    <property type="match status" value="1"/>
</dbReference>
<dbReference type="InterPro" id="IPR007458">
    <property type="entry name" value="DUF496"/>
</dbReference>
<dbReference type="NCBIfam" id="NF003844">
    <property type="entry name" value="PRK05423.1"/>
    <property type="match status" value="1"/>
</dbReference>
<dbReference type="PANTHER" id="PTHR39591">
    <property type="entry name" value="UPF0265 PROTEIN YEEX"/>
    <property type="match status" value="1"/>
</dbReference>
<dbReference type="PANTHER" id="PTHR39591:SF1">
    <property type="entry name" value="UPF0265 PROTEIN YEEX"/>
    <property type="match status" value="1"/>
</dbReference>
<dbReference type="Pfam" id="PF04363">
    <property type="entry name" value="DUF496"/>
    <property type="match status" value="1"/>
</dbReference>
<dbReference type="PIRSF" id="PIRSF028773">
    <property type="entry name" value="UCP028773"/>
    <property type="match status" value="1"/>
</dbReference>
<gene>
    <name evidence="1" type="primary">tmaR</name>
    <name type="ordered locus">FN0411</name>
</gene>